<accession>Q8CXK5</accession>
<gene>
    <name evidence="1" type="primary">fosB</name>
    <name type="ordered locus">OB0825</name>
</gene>
<keyword id="KW-0046">Antibiotic resistance</keyword>
<keyword id="KW-0963">Cytoplasm</keyword>
<keyword id="KW-0460">Magnesium</keyword>
<keyword id="KW-0479">Metal-binding</keyword>
<keyword id="KW-1185">Reference proteome</keyword>
<keyword id="KW-0808">Transferase</keyword>
<protein>
    <recommendedName>
        <fullName evidence="1">Metallothiol transferase FosB</fullName>
        <ecNumber evidence="1">2.5.1.-</ecNumber>
    </recommendedName>
    <alternativeName>
        <fullName evidence="1">Fosfomycin resistance protein</fullName>
    </alternativeName>
</protein>
<feature type="chain" id="PRO_0000164033" description="Metallothiol transferase FosB">
    <location>
        <begin position="1"/>
        <end position="139"/>
    </location>
</feature>
<feature type="domain" description="VOC" evidence="2">
    <location>
        <begin position="5"/>
        <end position="120"/>
    </location>
</feature>
<feature type="active site" description="Proton donor/acceptor" evidence="2">
    <location>
        <position position="116"/>
    </location>
</feature>
<feature type="binding site" evidence="1">
    <location>
        <position position="8"/>
    </location>
    <ligand>
        <name>Mg(2+)</name>
        <dbReference type="ChEBI" id="CHEBI:18420"/>
    </ligand>
</feature>
<feature type="binding site" evidence="1">
    <location>
        <position position="67"/>
    </location>
    <ligand>
        <name>Mg(2+)</name>
        <dbReference type="ChEBI" id="CHEBI:18420"/>
    </ligand>
</feature>
<feature type="binding site" evidence="1">
    <location>
        <position position="116"/>
    </location>
    <ligand>
        <name>Mg(2+)</name>
        <dbReference type="ChEBI" id="CHEBI:18420"/>
    </ligand>
</feature>
<sequence length="139" mass="16401">MNIKGLNHLLFSVSNLEQSIDFYQQVFDAKLLVKGRSTAYFDLNGIWLALNEEKHIPRNEINESYTHTAFSIDESELESAIQHLKALNVNILEGRERAEQDKQSIYFTDPDGHKFEFHTGTLQERLKYYRDQKKHMTFY</sequence>
<proteinExistence type="inferred from homology"/>
<dbReference type="EC" id="2.5.1.-" evidence="1"/>
<dbReference type="EMBL" id="BA000028">
    <property type="protein sequence ID" value="BAC12781.1"/>
    <property type="status" value="ALT_INIT"/>
    <property type="molecule type" value="Genomic_DNA"/>
</dbReference>
<dbReference type="RefSeq" id="WP_070097408.1">
    <property type="nucleotide sequence ID" value="NC_004193.1"/>
</dbReference>
<dbReference type="SMR" id="Q8CXK5"/>
<dbReference type="STRING" id="221109.gene:10733046"/>
<dbReference type="KEGG" id="oih:OB0825"/>
<dbReference type="eggNOG" id="COG0346">
    <property type="taxonomic scope" value="Bacteria"/>
</dbReference>
<dbReference type="HOGENOM" id="CLU_121356_0_0_9"/>
<dbReference type="OrthoDB" id="192739at2"/>
<dbReference type="PhylomeDB" id="Q8CXK5"/>
<dbReference type="Proteomes" id="UP000000822">
    <property type="component" value="Chromosome"/>
</dbReference>
<dbReference type="GO" id="GO:0005737">
    <property type="term" value="C:cytoplasm"/>
    <property type="evidence" value="ECO:0007669"/>
    <property type="project" value="UniProtKB-SubCell"/>
</dbReference>
<dbReference type="GO" id="GO:0000287">
    <property type="term" value="F:magnesium ion binding"/>
    <property type="evidence" value="ECO:0007669"/>
    <property type="project" value="UniProtKB-UniRule"/>
</dbReference>
<dbReference type="GO" id="GO:0016765">
    <property type="term" value="F:transferase activity, transferring alkyl or aryl (other than methyl) groups"/>
    <property type="evidence" value="ECO:0007669"/>
    <property type="project" value="UniProtKB-UniRule"/>
</dbReference>
<dbReference type="GO" id="GO:0046677">
    <property type="term" value="P:response to antibiotic"/>
    <property type="evidence" value="ECO:0007669"/>
    <property type="project" value="UniProtKB-UniRule"/>
</dbReference>
<dbReference type="Gene3D" id="3.10.180.10">
    <property type="entry name" value="2,3-Dihydroxybiphenyl 1,2-Dioxygenase, domain 1"/>
    <property type="match status" value="1"/>
</dbReference>
<dbReference type="HAMAP" id="MF_01512">
    <property type="entry name" value="FosB"/>
    <property type="match status" value="1"/>
</dbReference>
<dbReference type="InterPro" id="IPR051332">
    <property type="entry name" value="Fosfomycin_Res_Enzymes"/>
</dbReference>
<dbReference type="InterPro" id="IPR029068">
    <property type="entry name" value="Glyas_Bleomycin-R_OHBP_Dase"/>
</dbReference>
<dbReference type="InterPro" id="IPR004360">
    <property type="entry name" value="Glyas_Fos-R_dOase_dom"/>
</dbReference>
<dbReference type="InterPro" id="IPR022858">
    <property type="entry name" value="Metallothiol_Trafse_FosB"/>
</dbReference>
<dbReference type="InterPro" id="IPR037523">
    <property type="entry name" value="VOC"/>
</dbReference>
<dbReference type="NCBIfam" id="NF003152">
    <property type="entry name" value="PRK04101.1"/>
    <property type="match status" value="1"/>
</dbReference>
<dbReference type="PANTHER" id="PTHR36113:SF6">
    <property type="entry name" value="FOSFOMYCIN RESISTANCE PROTEIN FOSX"/>
    <property type="match status" value="1"/>
</dbReference>
<dbReference type="PANTHER" id="PTHR36113">
    <property type="entry name" value="LYASE, PUTATIVE-RELATED-RELATED"/>
    <property type="match status" value="1"/>
</dbReference>
<dbReference type="Pfam" id="PF00903">
    <property type="entry name" value="Glyoxalase"/>
    <property type="match status" value="1"/>
</dbReference>
<dbReference type="SUPFAM" id="SSF54593">
    <property type="entry name" value="Glyoxalase/Bleomycin resistance protein/Dihydroxybiphenyl dioxygenase"/>
    <property type="match status" value="1"/>
</dbReference>
<dbReference type="PROSITE" id="PS51819">
    <property type="entry name" value="VOC"/>
    <property type="match status" value="1"/>
</dbReference>
<comment type="function">
    <text evidence="1">Metallothiol transferase which confers resistance to fosfomycin by catalyzing the addition of a thiol cofactor to fosfomycin. L-cysteine is probably the physiological thiol donor.</text>
</comment>
<comment type="cofactor">
    <cofactor evidence="1">
        <name>Mg(2+)</name>
        <dbReference type="ChEBI" id="CHEBI:18420"/>
    </cofactor>
</comment>
<comment type="subunit">
    <text evidence="1">Homodimer.</text>
</comment>
<comment type="subcellular location">
    <subcellularLocation>
        <location evidence="1">Cytoplasm</location>
    </subcellularLocation>
</comment>
<comment type="similarity">
    <text evidence="1">Belongs to the fosfomycin resistance protein family. FosB subfamily.</text>
</comment>
<comment type="sequence caution" evidence="3">
    <conflict type="erroneous initiation">
        <sequence resource="EMBL-CDS" id="BAC12781"/>
    </conflict>
</comment>
<evidence type="ECO:0000255" key="1">
    <source>
        <dbReference type="HAMAP-Rule" id="MF_01512"/>
    </source>
</evidence>
<evidence type="ECO:0000255" key="2">
    <source>
        <dbReference type="PROSITE-ProRule" id="PRU01163"/>
    </source>
</evidence>
<evidence type="ECO:0000305" key="3"/>
<name>FOSB_OCEIH</name>
<reference key="1">
    <citation type="journal article" date="2002" name="Nucleic Acids Res.">
        <title>Genome sequence of Oceanobacillus iheyensis isolated from the Iheya Ridge and its unexpected adaptive capabilities to extreme environments.</title>
        <authorList>
            <person name="Takami H."/>
            <person name="Takaki Y."/>
            <person name="Uchiyama I."/>
        </authorList>
    </citation>
    <scope>NUCLEOTIDE SEQUENCE [LARGE SCALE GENOMIC DNA]</scope>
    <source>
        <strain>DSM 14371 / CIP 107618 / JCM 11309 / KCTC 3954 / HTE831</strain>
    </source>
</reference>
<organism>
    <name type="scientific">Oceanobacillus iheyensis (strain DSM 14371 / CIP 107618 / JCM 11309 / KCTC 3954 / HTE831)</name>
    <dbReference type="NCBI Taxonomy" id="221109"/>
    <lineage>
        <taxon>Bacteria</taxon>
        <taxon>Bacillati</taxon>
        <taxon>Bacillota</taxon>
        <taxon>Bacilli</taxon>
        <taxon>Bacillales</taxon>
        <taxon>Bacillaceae</taxon>
        <taxon>Oceanobacillus</taxon>
    </lineage>
</organism>